<keyword id="KW-1185">Reference proteome</keyword>
<reference key="1">
    <citation type="journal article" date="2004" name="Nature">
        <title>The DNA sequence and comparative analysis of human chromosome 5.</title>
        <authorList>
            <person name="Schmutz J."/>
            <person name="Martin J."/>
            <person name="Terry A."/>
            <person name="Couronne O."/>
            <person name="Grimwood J."/>
            <person name="Lowry S."/>
            <person name="Gordon L.A."/>
            <person name="Scott D."/>
            <person name="Xie G."/>
            <person name="Huang W."/>
            <person name="Hellsten U."/>
            <person name="Tran-Gyamfi M."/>
            <person name="She X."/>
            <person name="Prabhakar S."/>
            <person name="Aerts A."/>
            <person name="Altherr M."/>
            <person name="Bajorek E."/>
            <person name="Black S."/>
            <person name="Branscomb E."/>
            <person name="Caoile C."/>
            <person name="Challacombe J.F."/>
            <person name="Chan Y.M."/>
            <person name="Denys M."/>
            <person name="Detter J.C."/>
            <person name="Escobar J."/>
            <person name="Flowers D."/>
            <person name="Fotopulos D."/>
            <person name="Glavina T."/>
            <person name="Gomez M."/>
            <person name="Gonzales E."/>
            <person name="Goodstein D."/>
            <person name="Grigoriev I."/>
            <person name="Groza M."/>
            <person name="Hammon N."/>
            <person name="Hawkins T."/>
            <person name="Haydu L."/>
            <person name="Israni S."/>
            <person name="Jett J."/>
            <person name="Kadner K."/>
            <person name="Kimball H."/>
            <person name="Kobayashi A."/>
            <person name="Lopez F."/>
            <person name="Lou Y."/>
            <person name="Martinez D."/>
            <person name="Medina C."/>
            <person name="Morgan J."/>
            <person name="Nandkeshwar R."/>
            <person name="Noonan J.P."/>
            <person name="Pitluck S."/>
            <person name="Pollard M."/>
            <person name="Predki P."/>
            <person name="Priest J."/>
            <person name="Ramirez L."/>
            <person name="Retterer J."/>
            <person name="Rodriguez A."/>
            <person name="Rogers S."/>
            <person name="Salamov A."/>
            <person name="Salazar A."/>
            <person name="Thayer N."/>
            <person name="Tice H."/>
            <person name="Tsai M."/>
            <person name="Ustaszewska A."/>
            <person name="Vo N."/>
            <person name="Wheeler J."/>
            <person name="Wu K."/>
            <person name="Yang J."/>
            <person name="Dickson M."/>
            <person name="Cheng J.-F."/>
            <person name="Eichler E.E."/>
            <person name="Olsen A."/>
            <person name="Pennacchio L.A."/>
            <person name="Rokhsar D.S."/>
            <person name="Richardson P."/>
            <person name="Lucas S.M."/>
            <person name="Myers R.M."/>
            <person name="Rubin E.M."/>
        </authorList>
    </citation>
    <scope>NUCLEOTIDE SEQUENCE [LARGE SCALE GENOMIC DNA]</scope>
</reference>
<reference key="2">
    <citation type="journal article" date="2010" name="BMC Genomics">
        <title>Expression, tandem repeat copy number variation and stability of four macrosatellite arrays in the human genome.</title>
        <authorList>
            <person name="Tremblay D.C."/>
            <person name="Alexander G. Jr."/>
            <person name="Moseley S."/>
            <person name="Chadwick B.P."/>
        </authorList>
    </citation>
    <scope>TISSUE SPECIFICITY</scope>
</reference>
<name>TFKL3_HUMAN</name>
<comment type="tissue specificity">
    <text evidence="2">Expressed in fetal brain and testis.</text>
</comment>
<comment type="similarity">
    <text evidence="3">Belongs to the TAF11 family.</text>
</comment>
<accession>A0A1W2PRV1</accession>
<proteinExistence type="evidence at transcript level"/>
<organism>
    <name type="scientific">Homo sapiens</name>
    <name type="common">Human</name>
    <dbReference type="NCBI Taxonomy" id="9606"/>
    <lineage>
        <taxon>Eukaryota</taxon>
        <taxon>Metazoa</taxon>
        <taxon>Chordata</taxon>
        <taxon>Craniata</taxon>
        <taxon>Vertebrata</taxon>
        <taxon>Euteleostomi</taxon>
        <taxon>Mammalia</taxon>
        <taxon>Eutheria</taxon>
        <taxon>Euarchontoglires</taxon>
        <taxon>Primates</taxon>
        <taxon>Haplorrhini</taxon>
        <taxon>Catarrhini</taxon>
        <taxon>Hominidae</taxon>
        <taxon>Homo</taxon>
    </lineage>
</organism>
<evidence type="ECO:0000256" key="1">
    <source>
        <dbReference type="SAM" id="MobiDB-lite"/>
    </source>
</evidence>
<evidence type="ECO:0000269" key="2">
    <source>
    </source>
</evidence>
<evidence type="ECO:0000305" key="3"/>
<evidence type="ECO:0000312" key="4">
    <source>
        <dbReference type="HGNC" id="HGNC:53846"/>
    </source>
</evidence>
<protein>
    <recommendedName>
        <fullName evidence="3">TATA-box-binding protein-associated factor 11-like protein 3</fullName>
    </recommendedName>
</protein>
<feature type="chain" id="PRO_0000455993" description="TATA-box-binding protein-associated factor 11-like protein 3">
    <location>
        <begin position="1"/>
        <end position="198"/>
    </location>
</feature>
<feature type="region of interest" description="Disordered" evidence="1">
    <location>
        <begin position="1"/>
        <end position="90"/>
    </location>
</feature>
<feature type="compositionally biased region" description="Basic and acidic residues" evidence="1">
    <location>
        <begin position="38"/>
        <end position="50"/>
    </location>
</feature>
<feature type="compositionally biased region" description="Basic residues" evidence="1">
    <location>
        <begin position="69"/>
        <end position="78"/>
    </location>
</feature>
<feature type="compositionally biased region" description="Basic and acidic residues" evidence="1">
    <location>
        <begin position="79"/>
        <end position="90"/>
    </location>
</feature>
<sequence length="198" mass="21660">METGRQTGVSAEMLAMPRGLKGSKKDGIPEDLDGNLEAPRDQEGELRSEDVMDLTEGDSEASASAPPAAKRRKTHTKGKKESKPTVDAEEAQRMTTLLSAMSEEQLSRYEVCRRSAFPRARVAGLMRAITGSSVSENAAIAMAGIAKLFVGEVVEEALDVCEMWGETLPLQPKHLREAVRRLKPKGLFPNSNCKRIMF</sequence>
<gene>
    <name evidence="4" type="primary">TAF11L3</name>
</gene>
<dbReference type="EMBL" id="AC106774">
    <property type="status" value="NOT_ANNOTATED_CDS"/>
    <property type="molecule type" value="Genomic_DNA"/>
</dbReference>
<dbReference type="CCDS" id="CCDS93689.1"/>
<dbReference type="RefSeq" id="NP_001388629.1">
    <property type="nucleotide sequence ID" value="NM_001401700.1"/>
</dbReference>
<dbReference type="SMR" id="A0A1W2PRV1"/>
<dbReference type="FunCoup" id="A0A1W2PRV1">
    <property type="interactions" value="24"/>
</dbReference>
<dbReference type="STRING" id="9606.ENSP00000492787"/>
<dbReference type="BioMuta" id="ENSG00000284439"/>
<dbReference type="MassIVE" id="A0A1W2PRV1"/>
<dbReference type="PeptideAtlas" id="A0A1W2PRV1"/>
<dbReference type="Ensembl" id="ENST00000638668.1">
    <property type="protein sequence ID" value="ENSP00000492787.1"/>
    <property type="gene ID" value="ENSG00000284439.1"/>
</dbReference>
<dbReference type="GeneID" id="646103"/>
<dbReference type="MANE-Select" id="ENST00000638668.1">
    <property type="protein sequence ID" value="ENSP00000492787.1"/>
    <property type="RefSeq nucleotide sequence ID" value="NM_001401700.1"/>
    <property type="RefSeq protein sequence ID" value="NP_001388629.1"/>
</dbReference>
<dbReference type="AGR" id="HGNC:53846"/>
<dbReference type="GeneCards" id="TAF11L3"/>
<dbReference type="HGNC" id="HGNC:53846">
    <property type="gene designation" value="TAF11L3"/>
</dbReference>
<dbReference type="HPA" id="ENSG00000284439">
    <property type="expression patterns" value="Not detected"/>
</dbReference>
<dbReference type="VEuPathDB" id="HostDB:ENSG00000284439"/>
<dbReference type="GeneTree" id="ENSGT00390000013228"/>
<dbReference type="InParanoid" id="A0A1W2PRV1"/>
<dbReference type="OMA" id="ARYKVCR"/>
<dbReference type="PAN-GO" id="A0A1W2PRV1">
    <property type="GO annotations" value="3 GO annotations based on evolutionary models"/>
</dbReference>
<dbReference type="PRO" id="PR:A0A1W2PRV1"/>
<dbReference type="Proteomes" id="UP000005640">
    <property type="component" value="Chromosome 5"/>
</dbReference>
<dbReference type="RNAct" id="A0A1W2PRV1">
    <property type="molecule type" value="protein"/>
</dbReference>
<dbReference type="Bgee" id="ENSG00000284439">
    <property type="expression patterns" value="Expressed in sural nerve and 1 other cell type or tissue"/>
</dbReference>
<dbReference type="GO" id="GO:0005669">
    <property type="term" value="C:transcription factor TFIID complex"/>
    <property type="evidence" value="ECO:0000318"/>
    <property type="project" value="GO_Central"/>
</dbReference>
<dbReference type="GO" id="GO:0046982">
    <property type="term" value="F:protein heterodimerization activity"/>
    <property type="evidence" value="ECO:0007669"/>
    <property type="project" value="InterPro"/>
</dbReference>
<dbReference type="GO" id="GO:0051123">
    <property type="term" value="P:RNA polymerase II preinitiation complex assembly"/>
    <property type="evidence" value="ECO:0000318"/>
    <property type="project" value="GO_Central"/>
</dbReference>
<dbReference type="CDD" id="cd08048">
    <property type="entry name" value="HFD_TAF11"/>
    <property type="match status" value="1"/>
</dbReference>
<dbReference type="FunFam" id="1.10.20.10:FF:000025">
    <property type="entry name" value="Transcription initiation factor TFIID subunit 11"/>
    <property type="match status" value="1"/>
</dbReference>
<dbReference type="Gene3D" id="1.10.20.10">
    <property type="entry name" value="Histone, subunit A"/>
    <property type="match status" value="1"/>
</dbReference>
<dbReference type="InterPro" id="IPR009072">
    <property type="entry name" value="Histone-fold"/>
</dbReference>
<dbReference type="InterPro" id="IPR045127">
    <property type="entry name" value="TAF11-like"/>
</dbReference>
<dbReference type="InterPro" id="IPR006809">
    <property type="entry name" value="TAFII28_dom"/>
</dbReference>
<dbReference type="PANTHER" id="PTHR13218:SF18">
    <property type="entry name" value="TATA-BOX-BINDING PROTEIN-ASSOCIATED FACTOR 11-LIKE PROTEIN 10-RELATED"/>
    <property type="match status" value="1"/>
</dbReference>
<dbReference type="PANTHER" id="PTHR13218">
    <property type="entry name" value="TRANSCRIPTION INITIATION FACTOR TFIID SUBUNIT 11-RELATED"/>
    <property type="match status" value="1"/>
</dbReference>
<dbReference type="Pfam" id="PF04719">
    <property type="entry name" value="TAFII28"/>
    <property type="match status" value="1"/>
</dbReference>
<dbReference type="SUPFAM" id="SSF47113">
    <property type="entry name" value="Histone-fold"/>
    <property type="match status" value="1"/>
</dbReference>